<feature type="chain" id="PRO_0000377937" description="Uncharacterized protein 229L">
    <location>
        <begin position="1"/>
        <end position="599"/>
    </location>
</feature>
<feature type="region of interest" description="Disordered" evidence="1">
    <location>
        <begin position="1"/>
        <end position="146"/>
    </location>
</feature>
<feature type="compositionally biased region" description="Polar residues" evidence="1">
    <location>
        <begin position="1"/>
        <end position="10"/>
    </location>
</feature>
<feature type="compositionally biased region" description="Low complexity" evidence="1">
    <location>
        <begin position="11"/>
        <end position="20"/>
    </location>
</feature>
<feature type="compositionally biased region" description="Polar residues" evidence="1">
    <location>
        <begin position="24"/>
        <end position="44"/>
    </location>
</feature>
<feature type="compositionally biased region" description="Acidic residues" evidence="1">
    <location>
        <begin position="46"/>
        <end position="56"/>
    </location>
</feature>
<feature type="compositionally biased region" description="Acidic residues" evidence="1">
    <location>
        <begin position="89"/>
        <end position="114"/>
    </location>
</feature>
<feature type="compositionally biased region" description="Low complexity" evidence="1">
    <location>
        <begin position="118"/>
        <end position="127"/>
    </location>
</feature>
<feature type="compositionally biased region" description="Acidic residues" evidence="1">
    <location>
        <begin position="128"/>
        <end position="138"/>
    </location>
</feature>
<organismHost>
    <name type="scientific">Aedes vexans</name>
    <name type="common">Inland floodwater mosquito</name>
    <name type="synonym">Culex vexans</name>
    <dbReference type="NCBI Taxonomy" id="7163"/>
</organismHost>
<organismHost>
    <name type="scientific">Culex territans</name>
    <dbReference type="NCBI Taxonomy" id="42431"/>
</organismHost>
<organismHost>
    <name type="scientific">Culiseta annulata</name>
    <dbReference type="NCBI Taxonomy" id="332058"/>
</organismHost>
<organismHost>
    <name type="scientific">Ochlerotatus sollicitans</name>
    <name type="common">eastern saltmarsh mosquito</name>
    <dbReference type="NCBI Taxonomy" id="310513"/>
</organismHost>
<organismHost>
    <name type="scientific">Ochlerotatus taeniorhynchus</name>
    <name type="common">Black salt marsh mosquito</name>
    <name type="synonym">Aedes taeniorhynchus</name>
    <dbReference type="NCBI Taxonomy" id="329105"/>
</organismHost>
<organismHost>
    <name type="scientific">Psorophora ferox</name>
    <dbReference type="NCBI Taxonomy" id="7183"/>
</organismHost>
<dbReference type="EMBL" id="DQ643392">
    <property type="protein sequence ID" value="ABF82076.1"/>
    <property type="molecule type" value="Genomic_DNA"/>
</dbReference>
<dbReference type="RefSeq" id="YP_654618.1">
    <property type="nucleotide sequence ID" value="NC_008187.1"/>
</dbReference>
<dbReference type="KEGG" id="vg:4156272"/>
<dbReference type="OrthoDB" id="4676at10239"/>
<dbReference type="Proteomes" id="UP000001358">
    <property type="component" value="Genome"/>
</dbReference>
<gene>
    <name type="ORF">IIV3-046R</name>
</gene>
<name>VF229_IIV3</name>
<keyword id="KW-1185">Reference proteome</keyword>
<organism>
    <name type="scientific">Invertebrate iridescent virus 3</name>
    <name type="common">IIV-3</name>
    <name type="synonym">Mosquito iridescent virus</name>
    <dbReference type="NCBI Taxonomy" id="345201"/>
    <lineage>
        <taxon>Viruses</taxon>
        <taxon>Varidnaviria</taxon>
        <taxon>Bamfordvirae</taxon>
        <taxon>Nucleocytoviricota</taxon>
        <taxon>Megaviricetes</taxon>
        <taxon>Pimascovirales</taxon>
        <taxon>Iridoviridae</taxon>
        <taxon>Betairidovirinae</taxon>
        <taxon>Chloriridovirus</taxon>
    </lineage>
</organism>
<protein>
    <recommendedName>
        <fullName>Uncharacterized protein 229L</fullName>
    </recommendedName>
</protein>
<accession>Q197B4</accession>
<reference key="1">
    <citation type="journal article" date="2006" name="J. Virol.">
        <title>Genome of invertebrate iridescent virus type 3 (mosquito iridescent virus).</title>
        <authorList>
            <person name="Delhon G."/>
            <person name="Tulman E.R."/>
            <person name="Afonso C.L."/>
            <person name="Lu Z."/>
            <person name="Becnel J.J."/>
            <person name="Moser B.A."/>
            <person name="Kutish G.F."/>
            <person name="Rock D.L."/>
        </authorList>
    </citation>
    <scope>NUCLEOTIDE SEQUENCE [LARGE SCALE GENOMIC DNA]</scope>
</reference>
<sequence>MEQQSENVYFSGSESESLSDSESRAQPQNQNSDNSRSASLTPPDSSDLEDYVDSDSETSSSLVNAPKRIKIIRSPSTSNWPRRLTSDDNGSDDDSEDEDESNDEQDLVESEEEDQRSRSSSRSAMDISSEEDSGDDEPSFTLTELPGDVPDFKVYNRNIAIFSIKYLNQFGRLNAGIQETDFPTAKLVNTNRHVVVWINMLENDTTPVTPDSFDSFNLSGAIILKDSSGLIEYMYVHKNSRTVKSLLLDAIATIYNQVTGNDILINIWTQNINIDEDVRFLVNYGFVEPAIVGKNTIQMKYHPKIPHQQTLNEIRRLLGYSKRNVGWINVFLPKDLAIKLFSYVNNYDVEFGGYLPLTSVQKPNGAWVLGWDDTLVSKGESLSVYIPPPQEHQKLEETIIGFHTHPIALSSSNTISDGMVILPPSNIDLKGISNQWLFPRPNIAHFICSPEGLWVVSLTEEFQSLLMGLRDLGEVAWPCINMILFVIFESMFQQHDQKFNYPTVTPITKWFELTDVQDLIKNLTLKRCFNYLNIPMEKFEATCQTISGYQNVRLYDISYNKWESFSALPDEGLYFTFYYKYDDFTGYPRQKSLTTEASN</sequence>
<comment type="similarity">
    <text evidence="2">Belongs to the IIV-6 229L family.</text>
</comment>
<proteinExistence type="inferred from homology"/>
<evidence type="ECO:0000256" key="1">
    <source>
        <dbReference type="SAM" id="MobiDB-lite"/>
    </source>
</evidence>
<evidence type="ECO:0000305" key="2"/>